<evidence type="ECO:0000255" key="1">
    <source>
        <dbReference type="HAMAP-Rule" id="MF_03123"/>
    </source>
</evidence>
<evidence type="ECO:0000255" key="2">
    <source>
        <dbReference type="PROSITE-ProRule" id="PRU01266"/>
    </source>
</evidence>
<evidence type="ECO:0000256" key="3">
    <source>
        <dbReference type="SAM" id="MobiDB-lite"/>
    </source>
</evidence>
<name>LIPA_ASPFC</name>
<reference key="1">
    <citation type="journal article" date="2008" name="PLoS Genet.">
        <title>Genomic islands in the pathogenic filamentous fungus Aspergillus fumigatus.</title>
        <authorList>
            <person name="Fedorova N.D."/>
            <person name="Khaldi N."/>
            <person name="Joardar V.S."/>
            <person name="Maiti R."/>
            <person name="Amedeo P."/>
            <person name="Anderson M.J."/>
            <person name="Crabtree J."/>
            <person name="Silva J.C."/>
            <person name="Badger J.H."/>
            <person name="Albarraq A."/>
            <person name="Angiuoli S."/>
            <person name="Bussey H."/>
            <person name="Bowyer P."/>
            <person name="Cotty P.J."/>
            <person name="Dyer P.S."/>
            <person name="Egan A."/>
            <person name="Galens K."/>
            <person name="Fraser-Liggett C.M."/>
            <person name="Haas B.J."/>
            <person name="Inman J.M."/>
            <person name="Kent R."/>
            <person name="Lemieux S."/>
            <person name="Malavazi I."/>
            <person name="Orvis J."/>
            <person name="Roemer T."/>
            <person name="Ronning C.M."/>
            <person name="Sundaram J.P."/>
            <person name="Sutton G."/>
            <person name="Turner G."/>
            <person name="Venter J.C."/>
            <person name="White O.R."/>
            <person name="Whitty B.R."/>
            <person name="Youngman P."/>
            <person name="Wolfe K.H."/>
            <person name="Goldman G.H."/>
            <person name="Wortman J.R."/>
            <person name="Jiang B."/>
            <person name="Denning D.W."/>
            <person name="Nierman W.C."/>
        </authorList>
    </citation>
    <scope>NUCLEOTIDE SEQUENCE [LARGE SCALE GENOMIC DNA]</scope>
    <source>
        <strain>CBS 144.89 / FGSC A1163 / CEA10</strain>
    </source>
</reference>
<sequence length="414" mass="45479">MAVSTSHFRSLCASRPLSRTAIVGHISCRSYATTEPSPSATSTSTTTTARRRTTFKDKLNAGPSFADFVGNGNTPLDPSEAYALKTALVGPAGRKKEMTRLPSWLKTPIPDSKNYQRLKKDLRGLNLHTVCEEARCPNISDCWGGSDKSAATATIMLMGDTCTRGCRFCSVKTSRTPAPLDPHEPENTAEAISRWGLGYVVLTSVDRDDLADGGARHFAETVMKIKQKAPSILVECLTGDYAGDLEMVKLVARSGLDVYAHNVETVEALTPQVRDRRANFQQSIRVLEAAKNAQPSLITKTSLMLGLGETDDQLWDALRQLRAANVDVVTFGQYMRPTKRHMAVHEYVTPDRFELWRQRALDMGFLYCASGPLVRSSYKAGEAFIENVLKKRRATSGGTETVGVRPVTVDEVTR</sequence>
<protein>
    <recommendedName>
        <fullName evidence="1">Lipoyl synthase, mitochondrial</fullName>
        <ecNumber evidence="1">2.8.1.8</ecNumber>
    </recommendedName>
    <alternativeName>
        <fullName evidence="1">Lipoate synthase</fullName>
        <shortName evidence="1">LS</shortName>
        <shortName evidence="1">Lip-syn</shortName>
    </alternativeName>
    <alternativeName>
        <fullName evidence="1">Lipoic acid synthase</fullName>
    </alternativeName>
</protein>
<proteinExistence type="inferred from homology"/>
<feature type="transit peptide" description="Mitochondrion" evidence="1">
    <location>
        <begin position="1"/>
        <end position="31"/>
    </location>
</feature>
<feature type="chain" id="PRO_0000398254" description="Lipoyl synthase, mitochondrial">
    <location>
        <begin position="32"/>
        <end position="414"/>
    </location>
</feature>
<feature type="domain" description="Radical SAM core" evidence="2">
    <location>
        <begin position="145"/>
        <end position="366"/>
    </location>
</feature>
<feature type="region of interest" description="Disordered" evidence="3">
    <location>
        <begin position="31"/>
        <end position="51"/>
    </location>
</feature>
<feature type="compositionally biased region" description="Low complexity" evidence="3">
    <location>
        <begin position="32"/>
        <end position="48"/>
    </location>
</feature>
<feature type="binding site" evidence="1">
    <location>
        <position position="131"/>
    </location>
    <ligand>
        <name>[4Fe-4S] cluster</name>
        <dbReference type="ChEBI" id="CHEBI:49883"/>
        <label>1</label>
    </ligand>
</feature>
<feature type="binding site" evidence="1">
    <location>
        <position position="136"/>
    </location>
    <ligand>
        <name>[4Fe-4S] cluster</name>
        <dbReference type="ChEBI" id="CHEBI:49883"/>
        <label>1</label>
    </ligand>
</feature>
<feature type="binding site" evidence="1">
    <location>
        <position position="142"/>
    </location>
    <ligand>
        <name>[4Fe-4S] cluster</name>
        <dbReference type="ChEBI" id="CHEBI:49883"/>
        <label>1</label>
    </ligand>
</feature>
<feature type="binding site" evidence="1">
    <location>
        <position position="162"/>
    </location>
    <ligand>
        <name>[4Fe-4S] cluster</name>
        <dbReference type="ChEBI" id="CHEBI:49883"/>
        <label>2</label>
        <note>4Fe-4S-S-AdoMet</note>
    </ligand>
</feature>
<feature type="binding site" evidence="1">
    <location>
        <position position="166"/>
    </location>
    <ligand>
        <name>[4Fe-4S] cluster</name>
        <dbReference type="ChEBI" id="CHEBI:49883"/>
        <label>2</label>
        <note>4Fe-4S-S-AdoMet</note>
    </ligand>
</feature>
<feature type="binding site" evidence="1">
    <location>
        <position position="169"/>
    </location>
    <ligand>
        <name>[4Fe-4S] cluster</name>
        <dbReference type="ChEBI" id="CHEBI:49883"/>
        <label>2</label>
        <note>4Fe-4S-S-AdoMet</note>
    </ligand>
</feature>
<feature type="binding site" evidence="1">
    <location>
        <position position="377"/>
    </location>
    <ligand>
        <name>[4Fe-4S] cluster</name>
        <dbReference type="ChEBI" id="CHEBI:49883"/>
        <label>1</label>
    </ligand>
</feature>
<accession>B0XYY2</accession>
<dbReference type="EC" id="2.8.1.8" evidence="1"/>
<dbReference type="EMBL" id="DS499596">
    <property type="protein sequence ID" value="EDP53078.1"/>
    <property type="molecule type" value="Genomic_DNA"/>
</dbReference>
<dbReference type="SMR" id="B0XYY2"/>
<dbReference type="EnsemblFungi" id="EDP53078">
    <property type="protein sequence ID" value="EDP53078"/>
    <property type="gene ID" value="AFUB_042490"/>
</dbReference>
<dbReference type="VEuPathDB" id="FungiDB:AFUB_042490"/>
<dbReference type="HOGENOM" id="CLU_033144_0_1_1"/>
<dbReference type="OrthoDB" id="57037at5052"/>
<dbReference type="PhylomeDB" id="B0XYY2"/>
<dbReference type="UniPathway" id="UPA00538">
    <property type="reaction ID" value="UER00593"/>
</dbReference>
<dbReference type="Proteomes" id="UP000001699">
    <property type="component" value="Unassembled WGS sequence"/>
</dbReference>
<dbReference type="GO" id="GO:0005739">
    <property type="term" value="C:mitochondrion"/>
    <property type="evidence" value="ECO:0007669"/>
    <property type="project" value="UniProtKB-SubCell"/>
</dbReference>
<dbReference type="GO" id="GO:0051539">
    <property type="term" value="F:4 iron, 4 sulfur cluster binding"/>
    <property type="evidence" value="ECO:0007669"/>
    <property type="project" value="UniProtKB-UniRule"/>
</dbReference>
<dbReference type="GO" id="GO:0016992">
    <property type="term" value="F:lipoate synthase activity"/>
    <property type="evidence" value="ECO:0007669"/>
    <property type="project" value="UniProtKB-UniRule"/>
</dbReference>
<dbReference type="GO" id="GO:0046872">
    <property type="term" value="F:metal ion binding"/>
    <property type="evidence" value="ECO:0007669"/>
    <property type="project" value="UniProtKB-KW"/>
</dbReference>
<dbReference type="CDD" id="cd01335">
    <property type="entry name" value="Radical_SAM"/>
    <property type="match status" value="1"/>
</dbReference>
<dbReference type="FunFam" id="3.20.20.70:FF:000036">
    <property type="entry name" value="Lipoyl synthase, mitochondrial"/>
    <property type="match status" value="1"/>
</dbReference>
<dbReference type="Gene3D" id="3.20.20.70">
    <property type="entry name" value="Aldolase class I"/>
    <property type="match status" value="1"/>
</dbReference>
<dbReference type="HAMAP" id="MF_00206">
    <property type="entry name" value="Lipoyl_synth"/>
    <property type="match status" value="1"/>
</dbReference>
<dbReference type="InterPro" id="IPR013785">
    <property type="entry name" value="Aldolase_TIM"/>
</dbReference>
<dbReference type="InterPro" id="IPR006638">
    <property type="entry name" value="Elp3/MiaA/NifB-like_rSAM"/>
</dbReference>
<dbReference type="InterPro" id="IPR031691">
    <property type="entry name" value="LIAS_N"/>
</dbReference>
<dbReference type="InterPro" id="IPR003698">
    <property type="entry name" value="Lipoyl_synth"/>
</dbReference>
<dbReference type="InterPro" id="IPR007197">
    <property type="entry name" value="rSAM"/>
</dbReference>
<dbReference type="NCBIfam" id="TIGR00510">
    <property type="entry name" value="lipA"/>
    <property type="match status" value="1"/>
</dbReference>
<dbReference type="NCBIfam" id="NF004019">
    <property type="entry name" value="PRK05481.1"/>
    <property type="match status" value="1"/>
</dbReference>
<dbReference type="NCBIfam" id="NF009544">
    <property type="entry name" value="PRK12928.1"/>
    <property type="match status" value="1"/>
</dbReference>
<dbReference type="PANTHER" id="PTHR10949">
    <property type="entry name" value="LIPOYL SYNTHASE"/>
    <property type="match status" value="1"/>
</dbReference>
<dbReference type="PANTHER" id="PTHR10949:SF0">
    <property type="entry name" value="LIPOYL SYNTHASE, MITOCHONDRIAL"/>
    <property type="match status" value="1"/>
</dbReference>
<dbReference type="Pfam" id="PF16881">
    <property type="entry name" value="LIAS_N"/>
    <property type="match status" value="1"/>
</dbReference>
<dbReference type="Pfam" id="PF04055">
    <property type="entry name" value="Radical_SAM"/>
    <property type="match status" value="1"/>
</dbReference>
<dbReference type="SFLD" id="SFLDF00271">
    <property type="entry name" value="lipoyl_synthase"/>
    <property type="match status" value="1"/>
</dbReference>
<dbReference type="SFLD" id="SFLDS00029">
    <property type="entry name" value="Radical_SAM"/>
    <property type="match status" value="1"/>
</dbReference>
<dbReference type="SMART" id="SM00729">
    <property type="entry name" value="Elp3"/>
    <property type="match status" value="1"/>
</dbReference>
<dbReference type="SUPFAM" id="SSF102114">
    <property type="entry name" value="Radical SAM enzymes"/>
    <property type="match status" value="1"/>
</dbReference>
<dbReference type="PROSITE" id="PS51918">
    <property type="entry name" value="RADICAL_SAM"/>
    <property type="match status" value="1"/>
</dbReference>
<organism>
    <name type="scientific">Aspergillus fumigatus (strain CBS 144.89 / FGSC A1163 / CEA10)</name>
    <name type="common">Neosartorya fumigata</name>
    <dbReference type="NCBI Taxonomy" id="451804"/>
    <lineage>
        <taxon>Eukaryota</taxon>
        <taxon>Fungi</taxon>
        <taxon>Dikarya</taxon>
        <taxon>Ascomycota</taxon>
        <taxon>Pezizomycotina</taxon>
        <taxon>Eurotiomycetes</taxon>
        <taxon>Eurotiomycetidae</taxon>
        <taxon>Eurotiales</taxon>
        <taxon>Aspergillaceae</taxon>
        <taxon>Aspergillus</taxon>
        <taxon>Aspergillus subgen. Fumigati</taxon>
    </lineage>
</organism>
<keyword id="KW-0004">4Fe-4S</keyword>
<keyword id="KW-0408">Iron</keyword>
<keyword id="KW-0411">Iron-sulfur</keyword>
<keyword id="KW-0479">Metal-binding</keyword>
<keyword id="KW-0496">Mitochondrion</keyword>
<keyword id="KW-0949">S-adenosyl-L-methionine</keyword>
<keyword id="KW-0808">Transferase</keyword>
<keyword id="KW-0809">Transit peptide</keyword>
<gene>
    <name type="ORF">AFUB_042490</name>
</gene>
<comment type="function">
    <text evidence="1">Catalyzes the radical-mediated insertion of two sulfur atoms into the C-6 and C-8 positions of the octanoyl moiety bound to the lipoyl domains of lipoate-dependent enzymes, thereby converting the octanoylated domains into lipoylated derivatives.</text>
</comment>
<comment type="catalytic activity">
    <reaction evidence="1">
        <text>[[Fe-S] cluster scaffold protein carrying a second [4Fe-4S](2+) cluster] + N(6)-octanoyl-L-lysyl-[protein] + 2 oxidized [2Fe-2S]-[ferredoxin] + 2 S-adenosyl-L-methionine + 4 H(+) = [[Fe-S] cluster scaffold protein] + N(6)-[(R)-dihydrolipoyl]-L-lysyl-[protein] + 4 Fe(3+) + 2 hydrogen sulfide + 2 5'-deoxyadenosine + 2 L-methionine + 2 reduced [2Fe-2S]-[ferredoxin]</text>
        <dbReference type="Rhea" id="RHEA:16585"/>
        <dbReference type="Rhea" id="RHEA-COMP:9928"/>
        <dbReference type="Rhea" id="RHEA-COMP:10000"/>
        <dbReference type="Rhea" id="RHEA-COMP:10001"/>
        <dbReference type="Rhea" id="RHEA-COMP:10475"/>
        <dbReference type="Rhea" id="RHEA-COMP:14568"/>
        <dbReference type="Rhea" id="RHEA-COMP:14569"/>
        <dbReference type="ChEBI" id="CHEBI:15378"/>
        <dbReference type="ChEBI" id="CHEBI:17319"/>
        <dbReference type="ChEBI" id="CHEBI:29034"/>
        <dbReference type="ChEBI" id="CHEBI:29919"/>
        <dbReference type="ChEBI" id="CHEBI:33722"/>
        <dbReference type="ChEBI" id="CHEBI:33737"/>
        <dbReference type="ChEBI" id="CHEBI:33738"/>
        <dbReference type="ChEBI" id="CHEBI:57844"/>
        <dbReference type="ChEBI" id="CHEBI:59789"/>
        <dbReference type="ChEBI" id="CHEBI:78809"/>
        <dbReference type="ChEBI" id="CHEBI:83100"/>
        <dbReference type="EC" id="2.8.1.8"/>
    </reaction>
</comment>
<comment type="cofactor">
    <cofactor evidence="1">
        <name>[4Fe-4S] cluster</name>
        <dbReference type="ChEBI" id="CHEBI:49883"/>
    </cofactor>
    <text evidence="1">Binds 2 [4Fe-4S] clusters per subunit. One cluster is coordinated with 3 cysteines and an exchangeable S-adenosyl-L-methionine.</text>
</comment>
<comment type="pathway">
    <text evidence="1">Protein modification; protein lipoylation via endogenous pathway; protein N(6)-(lipoyl)lysine from octanoyl-[acyl-carrier-protein]: step 2/2.</text>
</comment>
<comment type="subcellular location">
    <subcellularLocation>
        <location evidence="1">Mitochondrion</location>
    </subcellularLocation>
</comment>
<comment type="similarity">
    <text evidence="1">Belongs to the radical SAM superfamily. Lipoyl synthase family.</text>
</comment>